<gene>
    <name evidence="1" type="primary">murC</name>
    <name type="ordered locus">CBO3548</name>
    <name type="ordered locus">CLC_3526</name>
</gene>
<sequence>MSFDFIKDKNKHIHFIGIGGISMSGLAEILLYNNFSISGSDMNSSPITEKLKDKGAKIYIGHKKENVKDADLIVYTAAIASDNPEITKAKEKNIKLMDRADFLGNLMKGYKYNIAISGTHGKTTTTSMLSHVALKANVDPTILVGGNLDIINGNVRVGESDFFITEACEYKSSFLKFFPYIGVILNIDADHLDYYKDLDDIKNAFSKFIKLIPKDGYLVAYGEDKNIQSIIKEASCNVITYGINSGDIQAHNIEYDEKACGNFDVVKDNQKLFSVKLNVPGKHNILNSLASICIGLASNMKDKDIIEGIESFFGTHRRFELKGCKNNITVIDDYAHHPTEISATLDAAKKYPHNKLFCVFQPHTYSRTLTLFDDFTKCFDNADEIILADIYAAREKDTGIISSDMLGDKLRDRGLKCTNFHKFDDIKNYLIENTKDGDLILTVGAGDIYKVGEMYINL</sequence>
<accession>A5I7S3</accession>
<accession>A7G905</accession>
<evidence type="ECO:0000255" key="1">
    <source>
        <dbReference type="HAMAP-Rule" id="MF_00046"/>
    </source>
</evidence>
<protein>
    <recommendedName>
        <fullName evidence="1">UDP-N-acetylmuramate--L-alanine ligase</fullName>
        <ecNumber evidence="1">6.3.2.8</ecNumber>
    </recommendedName>
    <alternativeName>
        <fullName evidence="1">UDP-N-acetylmuramoyl-L-alanine synthetase</fullName>
    </alternativeName>
</protein>
<dbReference type="EC" id="6.3.2.8" evidence="1"/>
<dbReference type="EMBL" id="CP000727">
    <property type="protein sequence ID" value="ABS36137.1"/>
    <property type="molecule type" value="Genomic_DNA"/>
</dbReference>
<dbReference type="EMBL" id="AM412317">
    <property type="protein sequence ID" value="CAL85108.1"/>
    <property type="molecule type" value="Genomic_DNA"/>
</dbReference>
<dbReference type="RefSeq" id="WP_012048388.1">
    <property type="nucleotide sequence ID" value="NC_009698.1"/>
</dbReference>
<dbReference type="RefSeq" id="YP_001256029.1">
    <property type="nucleotide sequence ID" value="NC_009495.1"/>
</dbReference>
<dbReference type="RefSeq" id="YP_001389270.1">
    <property type="nucleotide sequence ID" value="NC_009698.1"/>
</dbReference>
<dbReference type="SMR" id="A5I7S3"/>
<dbReference type="GeneID" id="5187804"/>
<dbReference type="KEGG" id="cbh:CLC_3526"/>
<dbReference type="KEGG" id="cbo:CBO3548"/>
<dbReference type="PATRIC" id="fig|413999.7.peg.3525"/>
<dbReference type="HOGENOM" id="CLU_028104_1_0_9"/>
<dbReference type="UniPathway" id="UPA00219"/>
<dbReference type="PRO" id="PR:A5I7S3"/>
<dbReference type="Proteomes" id="UP000001986">
    <property type="component" value="Chromosome"/>
</dbReference>
<dbReference type="GO" id="GO:0005737">
    <property type="term" value="C:cytoplasm"/>
    <property type="evidence" value="ECO:0007669"/>
    <property type="project" value="UniProtKB-SubCell"/>
</dbReference>
<dbReference type="GO" id="GO:0005524">
    <property type="term" value="F:ATP binding"/>
    <property type="evidence" value="ECO:0007669"/>
    <property type="project" value="UniProtKB-UniRule"/>
</dbReference>
<dbReference type="GO" id="GO:0008763">
    <property type="term" value="F:UDP-N-acetylmuramate-L-alanine ligase activity"/>
    <property type="evidence" value="ECO:0007669"/>
    <property type="project" value="UniProtKB-UniRule"/>
</dbReference>
<dbReference type="GO" id="GO:0051301">
    <property type="term" value="P:cell division"/>
    <property type="evidence" value="ECO:0007669"/>
    <property type="project" value="UniProtKB-KW"/>
</dbReference>
<dbReference type="GO" id="GO:0071555">
    <property type="term" value="P:cell wall organization"/>
    <property type="evidence" value="ECO:0007669"/>
    <property type="project" value="UniProtKB-KW"/>
</dbReference>
<dbReference type="GO" id="GO:0009252">
    <property type="term" value="P:peptidoglycan biosynthetic process"/>
    <property type="evidence" value="ECO:0007669"/>
    <property type="project" value="UniProtKB-UniRule"/>
</dbReference>
<dbReference type="GO" id="GO:0008360">
    <property type="term" value="P:regulation of cell shape"/>
    <property type="evidence" value="ECO:0007669"/>
    <property type="project" value="UniProtKB-KW"/>
</dbReference>
<dbReference type="Gene3D" id="3.90.190.20">
    <property type="entry name" value="Mur ligase, C-terminal domain"/>
    <property type="match status" value="1"/>
</dbReference>
<dbReference type="Gene3D" id="3.40.1190.10">
    <property type="entry name" value="Mur-like, catalytic domain"/>
    <property type="match status" value="1"/>
</dbReference>
<dbReference type="Gene3D" id="3.40.50.720">
    <property type="entry name" value="NAD(P)-binding Rossmann-like Domain"/>
    <property type="match status" value="1"/>
</dbReference>
<dbReference type="HAMAP" id="MF_00046">
    <property type="entry name" value="MurC"/>
    <property type="match status" value="1"/>
</dbReference>
<dbReference type="InterPro" id="IPR036565">
    <property type="entry name" value="Mur-like_cat_sf"/>
</dbReference>
<dbReference type="InterPro" id="IPR004101">
    <property type="entry name" value="Mur_ligase_C"/>
</dbReference>
<dbReference type="InterPro" id="IPR036615">
    <property type="entry name" value="Mur_ligase_C_dom_sf"/>
</dbReference>
<dbReference type="InterPro" id="IPR013221">
    <property type="entry name" value="Mur_ligase_cen"/>
</dbReference>
<dbReference type="InterPro" id="IPR000713">
    <property type="entry name" value="Mur_ligase_N"/>
</dbReference>
<dbReference type="InterPro" id="IPR050061">
    <property type="entry name" value="MurCDEF_pg_biosynth"/>
</dbReference>
<dbReference type="InterPro" id="IPR005758">
    <property type="entry name" value="UDP-N-AcMur_Ala_ligase_MurC"/>
</dbReference>
<dbReference type="NCBIfam" id="TIGR01082">
    <property type="entry name" value="murC"/>
    <property type="match status" value="1"/>
</dbReference>
<dbReference type="PANTHER" id="PTHR43445:SF3">
    <property type="entry name" value="UDP-N-ACETYLMURAMATE--L-ALANINE LIGASE"/>
    <property type="match status" value="1"/>
</dbReference>
<dbReference type="PANTHER" id="PTHR43445">
    <property type="entry name" value="UDP-N-ACETYLMURAMATE--L-ALANINE LIGASE-RELATED"/>
    <property type="match status" value="1"/>
</dbReference>
<dbReference type="Pfam" id="PF01225">
    <property type="entry name" value="Mur_ligase"/>
    <property type="match status" value="1"/>
</dbReference>
<dbReference type="Pfam" id="PF02875">
    <property type="entry name" value="Mur_ligase_C"/>
    <property type="match status" value="1"/>
</dbReference>
<dbReference type="Pfam" id="PF08245">
    <property type="entry name" value="Mur_ligase_M"/>
    <property type="match status" value="1"/>
</dbReference>
<dbReference type="SUPFAM" id="SSF51984">
    <property type="entry name" value="MurCD N-terminal domain"/>
    <property type="match status" value="1"/>
</dbReference>
<dbReference type="SUPFAM" id="SSF53623">
    <property type="entry name" value="MurD-like peptide ligases, catalytic domain"/>
    <property type="match status" value="1"/>
</dbReference>
<dbReference type="SUPFAM" id="SSF53244">
    <property type="entry name" value="MurD-like peptide ligases, peptide-binding domain"/>
    <property type="match status" value="1"/>
</dbReference>
<name>MURC_CLOBH</name>
<organism>
    <name type="scientific">Clostridium botulinum (strain Hall / ATCC 3502 / NCTC 13319 / Type A)</name>
    <dbReference type="NCBI Taxonomy" id="441771"/>
    <lineage>
        <taxon>Bacteria</taxon>
        <taxon>Bacillati</taxon>
        <taxon>Bacillota</taxon>
        <taxon>Clostridia</taxon>
        <taxon>Eubacteriales</taxon>
        <taxon>Clostridiaceae</taxon>
        <taxon>Clostridium</taxon>
    </lineage>
</organism>
<comment type="function">
    <text evidence="1">Cell wall formation.</text>
</comment>
<comment type="catalytic activity">
    <reaction evidence="1">
        <text>UDP-N-acetyl-alpha-D-muramate + L-alanine + ATP = UDP-N-acetyl-alpha-D-muramoyl-L-alanine + ADP + phosphate + H(+)</text>
        <dbReference type="Rhea" id="RHEA:23372"/>
        <dbReference type="ChEBI" id="CHEBI:15378"/>
        <dbReference type="ChEBI" id="CHEBI:30616"/>
        <dbReference type="ChEBI" id="CHEBI:43474"/>
        <dbReference type="ChEBI" id="CHEBI:57972"/>
        <dbReference type="ChEBI" id="CHEBI:70757"/>
        <dbReference type="ChEBI" id="CHEBI:83898"/>
        <dbReference type="ChEBI" id="CHEBI:456216"/>
        <dbReference type="EC" id="6.3.2.8"/>
    </reaction>
</comment>
<comment type="pathway">
    <text evidence="1">Cell wall biogenesis; peptidoglycan biosynthesis.</text>
</comment>
<comment type="subcellular location">
    <subcellularLocation>
        <location evidence="1">Cytoplasm</location>
    </subcellularLocation>
</comment>
<comment type="similarity">
    <text evidence="1">Belongs to the MurCDEF family.</text>
</comment>
<keyword id="KW-0067">ATP-binding</keyword>
<keyword id="KW-0131">Cell cycle</keyword>
<keyword id="KW-0132">Cell division</keyword>
<keyword id="KW-0133">Cell shape</keyword>
<keyword id="KW-0961">Cell wall biogenesis/degradation</keyword>
<keyword id="KW-0963">Cytoplasm</keyword>
<keyword id="KW-0436">Ligase</keyword>
<keyword id="KW-0547">Nucleotide-binding</keyword>
<keyword id="KW-0573">Peptidoglycan synthesis</keyword>
<keyword id="KW-1185">Reference proteome</keyword>
<feature type="chain" id="PRO_1000004333" description="UDP-N-acetylmuramate--L-alanine ligase">
    <location>
        <begin position="1"/>
        <end position="458"/>
    </location>
</feature>
<feature type="binding site" evidence="1">
    <location>
        <begin position="118"/>
        <end position="124"/>
    </location>
    <ligand>
        <name>ATP</name>
        <dbReference type="ChEBI" id="CHEBI:30616"/>
    </ligand>
</feature>
<proteinExistence type="inferred from homology"/>
<reference key="1">
    <citation type="journal article" date="2007" name="Genome Res.">
        <title>Genome sequence of a proteolytic (Group I) Clostridium botulinum strain Hall A and comparative analysis of the clostridial genomes.</title>
        <authorList>
            <person name="Sebaihia M."/>
            <person name="Peck M.W."/>
            <person name="Minton N.P."/>
            <person name="Thomson N.R."/>
            <person name="Holden M.T.G."/>
            <person name="Mitchell W.J."/>
            <person name="Carter A.T."/>
            <person name="Bentley S.D."/>
            <person name="Mason D.R."/>
            <person name="Crossman L."/>
            <person name="Paul C.J."/>
            <person name="Ivens A."/>
            <person name="Wells-Bennik M.H.J."/>
            <person name="Davis I.J."/>
            <person name="Cerdeno-Tarraga A.M."/>
            <person name="Churcher C."/>
            <person name="Quail M.A."/>
            <person name="Chillingworth T."/>
            <person name="Feltwell T."/>
            <person name="Fraser A."/>
            <person name="Goodhead I."/>
            <person name="Hance Z."/>
            <person name="Jagels K."/>
            <person name="Larke N."/>
            <person name="Maddison M."/>
            <person name="Moule S."/>
            <person name="Mungall K."/>
            <person name="Norbertczak H."/>
            <person name="Rabbinowitsch E."/>
            <person name="Sanders M."/>
            <person name="Simmonds M."/>
            <person name="White B."/>
            <person name="Whithead S."/>
            <person name="Parkhill J."/>
        </authorList>
    </citation>
    <scope>NUCLEOTIDE SEQUENCE [LARGE SCALE GENOMIC DNA]</scope>
    <source>
        <strain>Hall / ATCC 3502 / NCTC 13319 / Type A</strain>
    </source>
</reference>
<reference key="2">
    <citation type="journal article" date="2007" name="PLoS ONE">
        <title>Analysis of the neurotoxin complex genes in Clostridium botulinum A1-A4 and B1 strains: BoNT/A3, /Ba4 and /B1 clusters are located within plasmids.</title>
        <authorList>
            <person name="Smith T.J."/>
            <person name="Hill K.K."/>
            <person name="Foley B.T."/>
            <person name="Detter J.C."/>
            <person name="Munk A.C."/>
            <person name="Bruce D.C."/>
            <person name="Doggett N.A."/>
            <person name="Smith L.A."/>
            <person name="Marks J.D."/>
            <person name="Xie G."/>
            <person name="Brettin T.S."/>
        </authorList>
    </citation>
    <scope>NUCLEOTIDE SEQUENCE [LARGE SCALE GENOMIC DNA]</scope>
    <source>
        <strain>Hall / ATCC 3502 / NCTC 13319 / Type A</strain>
    </source>
</reference>